<gene>
    <name evidence="1" type="primary">rpsS</name>
    <name type="ordered locus">LEUM_0200</name>
</gene>
<protein>
    <recommendedName>
        <fullName evidence="1">Small ribosomal subunit protein uS19</fullName>
    </recommendedName>
    <alternativeName>
        <fullName evidence="2">30S ribosomal protein S19</fullName>
    </alternativeName>
</protein>
<proteinExistence type="inferred from homology"/>
<evidence type="ECO:0000255" key="1">
    <source>
        <dbReference type="HAMAP-Rule" id="MF_00531"/>
    </source>
</evidence>
<evidence type="ECO:0000305" key="2"/>
<accession>Q03ZP1</accession>
<sequence length="92" mass="10487">MARSLKKGPFADPHLLKKIEAQVDSEKKSVIKTWSRRSTIFPSFIGFTIAVYDGRKHVPVYVQEDMVGHKLGEFVPTRTFKGHKNDDKKTGK</sequence>
<dbReference type="EMBL" id="CP000414">
    <property type="protein sequence ID" value="ABJ61331.1"/>
    <property type="molecule type" value="Genomic_DNA"/>
</dbReference>
<dbReference type="RefSeq" id="WP_002816034.1">
    <property type="nucleotide sequence ID" value="NC_008531.1"/>
</dbReference>
<dbReference type="SMR" id="Q03ZP1"/>
<dbReference type="EnsemblBacteria" id="ABJ61331">
    <property type="protein sequence ID" value="ABJ61331"/>
    <property type="gene ID" value="LEUM_0200"/>
</dbReference>
<dbReference type="GeneID" id="97504977"/>
<dbReference type="KEGG" id="lme:LEUM_0200"/>
<dbReference type="eggNOG" id="COG0185">
    <property type="taxonomic scope" value="Bacteria"/>
</dbReference>
<dbReference type="HOGENOM" id="CLU_144911_0_1_9"/>
<dbReference type="Proteomes" id="UP000000362">
    <property type="component" value="Chromosome"/>
</dbReference>
<dbReference type="GO" id="GO:0005737">
    <property type="term" value="C:cytoplasm"/>
    <property type="evidence" value="ECO:0007669"/>
    <property type="project" value="UniProtKB-ARBA"/>
</dbReference>
<dbReference type="GO" id="GO:0015935">
    <property type="term" value="C:small ribosomal subunit"/>
    <property type="evidence" value="ECO:0007669"/>
    <property type="project" value="InterPro"/>
</dbReference>
<dbReference type="GO" id="GO:0019843">
    <property type="term" value="F:rRNA binding"/>
    <property type="evidence" value="ECO:0007669"/>
    <property type="project" value="UniProtKB-UniRule"/>
</dbReference>
<dbReference type="GO" id="GO:0003735">
    <property type="term" value="F:structural constituent of ribosome"/>
    <property type="evidence" value="ECO:0007669"/>
    <property type="project" value="InterPro"/>
</dbReference>
<dbReference type="GO" id="GO:0000028">
    <property type="term" value="P:ribosomal small subunit assembly"/>
    <property type="evidence" value="ECO:0007669"/>
    <property type="project" value="TreeGrafter"/>
</dbReference>
<dbReference type="GO" id="GO:0006412">
    <property type="term" value="P:translation"/>
    <property type="evidence" value="ECO:0007669"/>
    <property type="project" value="UniProtKB-UniRule"/>
</dbReference>
<dbReference type="FunFam" id="3.30.860.10:FF:000001">
    <property type="entry name" value="30S ribosomal protein S19"/>
    <property type="match status" value="1"/>
</dbReference>
<dbReference type="Gene3D" id="3.30.860.10">
    <property type="entry name" value="30s Ribosomal Protein S19, Chain A"/>
    <property type="match status" value="1"/>
</dbReference>
<dbReference type="HAMAP" id="MF_00531">
    <property type="entry name" value="Ribosomal_uS19"/>
    <property type="match status" value="1"/>
</dbReference>
<dbReference type="InterPro" id="IPR002222">
    <property type="entry name" value="Ribosomal_uS19"/>
</dbReference>
<dbReference type="InterPro" id="IPR005732">
    <property type="entry name" value="Ribosomal_uS19_bac-type"/>
</dbReference>
<dbReference type="InterPro" id="IPR020934">
    <property type="entry name" value="Ribosomal_uS19_CS"/>
</dbReference>
<dbReference type="InterPro" id="IPR023575">
    <property type="entry name" value="Ribosomal_uS19_SF"/>
</dbReference>
<dbReference type="NCBIfam" id="TIGR01050">
    <property type="entry name" value="rpsS_bact"/>
    <property type="match status" value="1"/>
</dbReference>
<dbReference type="PANTHER" id="PTHR11880">
    <property type="entry name" value="RIBOSOMAL PROTEIN S19P FAMILY MEMBER"/>
    <property type="match status" value="1"/>
</dbReference>
<dbReference type="PANTHER" id="PTHR11880:SF8">
    <property type="entry name" value="SMALL RIBOSOMAL SUBUNIT PROTEIN US19M"/>
    <property type="match status" value="1"/>
</dbReference>
<dbReference type="Pfam" id="PF00203">
    <property type="entry name" value="Ribosomal_S19"/>
    <property type="match status" value="1"/>
</dbReference>
<dbReference type="PIRSF" id="PIRSF002144">
    <property type="entry name" value="Ribosomal_S19"/>
    <property type="match status" value="1"/>
</dbReference>
<dbReference type="PRINTS" id="PR00975">
    <property type="entry name" value="RIBOSOMALS19"/>
</dbReference>
<dbReference type="SUPFAM" id="SSF54570">
    <property type="entry name" value="Ribosomal protein S19"/>
    <property type="match status" value="1"/>
</dbReference>
<dbReference type="PROSITE" id="PS00323">
    <property type="entry name" value="RIBOSOMAL_S19"/>
    <property type="match status" value="1"/>
</dbReference>
<reference key="1">
    <citation type="journal article" date="2006" name="Proc. Natl. Acad. Sci. U.S.A.">
        <title>Comparative genomics of the lactic acid bacteria.</title>
        <authorList>
            <person name="Makarova K.S."/>
            <person name="Slesarev A."/>
            <person name="Wolf Y.I."/>
            <person name="Sorokin A."/>
            <person name="Mirkin B."/>
            <person name="Koonin E.V."/>
            <person name="Pavlov A."/>
            <person name="Pavlova N."/>
            <person name="Karamychev V."/>
            <person name="Polouchine N."/>
            <person name="Shakhova V."/>
            <person name="Grigoriev I."/>
            <person name="Lou Y."/>
            <person name="Rohksar D."/>
            <person name="Lucas S."/>
            <person name="Huang K."/>
            <person name="Goodstein D.M."/>
            <person name="Hawkins T."/>
            <person name="Plengvidhya V."/>
            <person name="Welker D."/>
            <person name="Hughes J."/>
            <person name="Goh Y."/>
            <person name="Benson A."/>
            <person name="Baldwin K."/>
            <person name="Lee J.-H."/>
            <person name="Diaz-Muniz I."/>
            <person name="Dosti B."/>
            <person name="Smeianov V."/>
            <person name="Wechter W."/>
            <person name="Barabote R."/>
            <person name="Lorca G."/>
            <person name="Altermann E."/>
            <person name="Barrangou R."/>
            <person name="Ganesan B."/>
            <person name="Xie Y."/>
            <person name="Rawsthorne H."/>
            <person name="Tamir D."/>
            <person name="Parker C."/>
            <person name="Breidt F."/>
            <person name="Broadbent J.R."/>
            <person name="Hutkins R."/>
            <person name="O'Sullivan D."/>
            <person name="Steele J."/>
            <person name="Unlu G."/>
            <person name="Saier M.H. Jr."/>
            <person name="Klaenhammer T."/>
            <person name="Richardson P."/>
            <person name="Kozyavkin S."/>
            <person name="Weimer B.C."/>
            <person name="Mills D.A."/>
        </authorList>
    </citation>
    <scope>NUCLEOTIDE SEQUENCE [LARGE SCALE GENOMIC DNA]</scope>
    <source>
        <strain>ATCC 8293 / DSM 20343 / BCRC 11652 / CCM 1803 / JCM 6124 / NCDO 523 / NBRC 100496 / NCIMB 8023 / NCTC 12954 / NRRL B-1118 / 37Y</strain>
    </source>
</reference>
<feature type="chain" id="PRO_1000051070" description="Small ribosomal subunit protein uS19">
    <location>
        <begin position="1"/>
        <end position="92"/>
    </location>
</feature>
<keyword id="KW-1185">Reference proteome</keyword>
<keyword id="KW-0687">Ribonucleoprotein</keyword>
<keyword id="KW-0689">Ribosomal protein</keyword>
<keyword id="KW-0694">RNA-binding</keyword>
<keyword id="KW-0699">rRNA-binding</keyword>
<comment type="function">
    <text evidence="1">Protein S19 forms a complex with S13 that binds strongly to the 16S ribosomal RNA.</text>
</comment>
<comment type="similarity">
    <text evidence="1">Belongs to the universal ribosomal protein uS19 family.</text>
</comment>
<name>RS19_LEUMM</name>
<organism>
    <name type="scientific">Leuconostoc mesenteroides subsp. mesenteroides (strain ATCC 8293 / DSM 20343 / BCRC 11652 / CCM 1803 / JCM 6124 / NCDO 523 / NBRC 100496 / NCIMB 8023 / NCTC 12954 / NRRL B-1118 / 37Y)</name>
    <dbReference type="NCBI Taxonomy" id="203120"/>
    <lineage>
        <taxon>Bacteria</taxon>
        <taxon>Bacillati</taxon>
        <taxon>Bacillota</taxon>
        <taxon>Bacilli</taxon>
        <taxon>Lactobacillales</taxon>
        <taxon>Lactobacillaceae</taxon>
        <taxon>Leuconostoc</taxon>
    </lineage>
</organism>